<reference key="1">
    <citation type="submission" date="2008-12" db="EMBL/GenBank/DDBJ databases">
        <title>Complete sequence of chromosome of Shewanella baltica OS223.</title>
        <authorList>
            <consortium name="US DOE Joint Genome Institute"/>
            <person name="Lucas S."/>
            <person name="Copeland A."/>
            <person name="Lapidus A."/>
            <person name="Glavina del Rio T."/>
            <person name="Dalin E."/>
            <person name="Tice H."/>
            <person name="Bruce D."/>
            <person name="Goodwin L."/>
            <person name="Pitluck S."/>
            <person name="Chertkov O."/>
            <person name="Meincke L."/>
            <person name="Brettin T."/>
            <person name="Detter J.C."/>
            <person name="Han C."/>
            <person name="Kuske C.R."/>
            <person name="Larimer F."/>
            <person name="Land M."/>
            <person name="Hauser L."/>
            <person name="Kyrpides N."/>
            <person name="Ovchinnikova G."/>
            <person name="Brettar I."/>
            <person name="Rodrigues J."/>
            <person name="Konstantinidis K."/>
            <person name="Tiedje J."/>
        </authorList>
    </citation>
    <scope>NUCLEOTIDE SEQUENCE [LARGE SCALE GENOMIC DNA]</scope>
    <source>
        <strain>OS223</strain>
    </source>
</reference>
<organism>
    <name type="scientific">Shewanella baltica (strain OS223)</name>
    <dbReference type="NCBI Taxonomy" id="407976"/>
    <lineage>
        <taxon>Bacteria</taxon>
        <taxon>Pseudomonadati</taxon>
        <taxon>Pseudomonadota</taxon>
        <taxon>Gammaproteobacteria</taxon>
        <taxon>Alteromonadales</taxon>
        <taxon>Shewanellaceae</taxon>
        <taxon>Shewanella</taxon>
    </lineage>
</organism>
<feature type="chain" id="PRO_1000195992" description="Large ribosomal subunit protein bL32">
    <location>
        <begin position="1"/>
        <end position="56"/>
    </location>
</feature>
<feature type="region of interest" description="Disordered" evidence="2">
    <location>
        <begin position="1"/>
        <end position="26"/>
    </location>
</feature>
<feature type="compositionally biased region" description="Basic residues" evidence="2">
    <location>
        <begin position="7"/>
        <end position="16"/>
    </location>
</feature>
<name>RL32_SHEB2</name>
<gene>
    <name evidence="1" type="primary">rpmF</name>
    <name type="ordered locus">Sbal223_2652</name>
</gene>
<evidence type="ECO:0000255" key="1">
    <source>
        <dbReference type="HAMAP-Rule" id="MF_00340"/>
    </source>
</evidence>
<evidence type="ECO:0000256" key="2">
    <source>
        <dbReference type="SAM" id="MobiDB-lite"/>
    </source>
</evidence>
<evidence type="ECO:0000305" key="3"/>
<dbReference type="EMBL" id="CP001252">
    <property type="protein sequence ID" value="ACK47142.1"/>
    <property type="molecule type" value="Genomic_DNA"/>
</dbReference>
<dbReference type="RefSeq" id="WP_006081226.1">
    <property type="nucleotide sequence ID" value="NC_011663.1"/>
</dbReference>
<dbReference type="SMR" id="B8EF24"/>
<dbReference type="GeneID" id="67443097"/>
<dbReference type="KEGG" id="sbp:Sbal223_2652"/>
<dbReference type="HOGENOM" id="CLU_129084_2_1_6"/>
<dbReference type="Proteomes" id="UP000002507">
    <property type="component" value="Chromosome"/>
</dbReference>
<dbReference type="GO" id="GO:0015934">
    <property type="term" value="C:large ribosomal subunit"/>
    <property type="evidence" value="ECO:0007669"/>
    <property type="project" value="InterPro"/>
</dbReference>
<dbReference type="GO" id="GO:0003735">
    <property type="term" value="F:structural constituent of ribosome"/>
    <property type="evidence" value="ECO:0007669"/>
    <property type="project" value="InterPro"/>
</dbReference>
<dbReference type="GO" id="GO:0006412">
    <property type="term" value="P:translation"/>
    <property type="evidence" value="ECO:0007669"/>
    <property type="project" value="UniProtKB-UniRule"/>
</dbReference>
<dbReference type="HAMAP" id="MF_00340">
    <property type="entry name" value="Ribosomal_bL32"/>
    <property type="match status" value="1"/>
</dbReference>
<dbReference type="InterPro" id="IPR002677">
    <property type="entry name" value="Ribosomal_bL32"/>
</dbReference>
<dbReference type="InterPro" id="IPR044957">
    <property type="entry name" value="Ribosomal_bL32_bact"/>
</dbReference>
<dbReference type="InterPro" id="IPR011332">
    <property type="entry name" value="Ribosomal_zn-bd"/>
</dbReference>
<dbReference type="NCBIfam" id="TIGR01031">
    <property type="entry name" value="rpmF_bact"/>
    <property type="match status" value="1"/>
</dbReference>
<dbReference type="PANTHER" id="PTHR35534">
    <property type="entry name" value="50S RIBOSOMAL PROTEIN L32"/>
    <property type="match status" value="1"/>
</dbReference>
<dbReference type="PANTHER" id="PTHR35534:SF1">
    <property type="entry name" value="LARGE RIBOSOMAL SUBUNIT PROTEIN BL32"/>
    <property type="match status" value="1"/>
</dbReference>
<dbReference type="Pfam" id="PF01783">
    <property type="entry name" value="Ribosomal_L32p"/>
    <property type="match status" value="1"/>
</dbReference>
<dbReference type="SUPFAM" id="SSF57829">
    <property type="entry name" value="Zn-binding ribosomal proteins"/>
    <property type="match status" value="1"/>
</dbReference>
<sequence>MAVQQNKKSRSKRGMRRSHDALSTAQLSVDATSGEIHMRHNVTADGFYRGKKVINK</sequence>
<keyword id="KW-0687">Ribonucleoprotein</keyword>
<keyword id="KW-0689">Ribosomal protein</keyword>
<proteinExistence type="inferred from homology"/>
<protein>
    <recommendedName>
        <fullName evidence="1">Large ribosomal subunit protein bL32</fullName>
    </recommendedName>
    <alternativeName>
        <fullName evidence="3">50S ribosomal protein L32</fullName>
    </alternativeName>
</protein>
<comment type="similarity">
    <text evidence="1">Belongs to the bacterial ribosomal protein bL32 family.</text>
</comment>
<accession>B8EF24</accession>